<sequence length="116" mass="13568">MIEKVYEFKRDAKTKVVEKLVNTEHVQINHIVLPRGEQMPKHYSNSYVHLIIIKGEMTLTLEDQEPHNYKEGNIVYVPFNVKMLIQNINSDILEFFVVKAPHPKKLNAPEDPIKCE</sequence>
<reference key="1">
    <citation type="journal article" date="1996" name="Science">
        <title>Complete genome sequence of the methanogenic archaeon, Methanococcus jannaschii.</title>
        <authorList>
            <person name="Bult C.J."/>
            <person name="White O."/>
            <person name="Olsen G.J."/>
            <person name="Zhou L."/>
            <person name="Fleischmann R.D."/>
            <person name="Sutton G.G."/>
            <person name="Blake J.A."/>
            <person name="FitzGerald L.M."/>
            <person name="Clayton R.A."/>
            <person name="Gocayne J.D."/>
            <person name="Kerlavage A.R."/>
            <person name="Dougherty B.A."/>
            <person name="Tomb J.-F."/>
            <person name="Adams M.D."/>
            <person name="Reich C.I."/>
            <person name="Overbeek R."/>
            <person name="Kirkness E.F."/>
            <person name="Weinstock K.G."/>
            <person name="Merrick J.M."/>
            <person name="Glodek A."/>
            <person name="Scott J.L."/>
            <person name="Geoghagen N.S.M."/>
            <person name="Weidman J.F."/>
            <person name="Fuhrmann J.L."/>
            <person name="Nguyen D."/>
            <person name="Utterback T.R."/>
            <person name="Kelley J.M."/>
            <person name="Peterson J.D."/>
            <person name="Sadow P.W."/>
            <person name="Hanna M.C."/>
            <person name="Cotton M.D."/>
            <person name="Roberts K.M."/>
            <person name="Hurst M.A."/>
            <person name="Kaine B.P."/>
            <person name="Borodovsky M."/>
            <person name="Klenk H.-P."/>
            <person name="Fraser C.M."/>
            <person name="Smith H.O."/>
            <person name="Woese C.R."/>
            <person name="Venter J.C."/>
        </authorList>
    </citation>
    <scope>NUCLEOTIDE SEQUENCE [LARGE SCALE GENOMIC DNA]</scope>
    <source>
        <strain>ATCC 43067 / DSM 2661 / JAL-1 / JCM 10045 / NBRC 100440</strain>
    </source>
</reference>
<name>Y764_METJA</name>
<feature type="chain" id="PRO_0000107022" description="Uncharacterized protein MJ0764">
    <location>
        <begin position="1"/>
        <end position="116"/>
    </location>
</feature>
<feature type="strand" evidence="1">
    <location>
        <begin position="16"/>
        <end position="22"/>
    </location>
</feature>
<feature type="strand" evidence="1">
    <location>
        <begin position="27"/>
        <end position="34"/>
    </location>
</feature>
<feature type="strand" evidence="1">
    <location>
        <begin position="48"/>
        <end position="61"/>
    </location>
</feature>
<feature type="strand" evidence="1">
    <location>
        <begin position="67"/>
        <end position="70"/>
    </location>
</feature>
<feature type="strand" evidence="1">
    <location>
        <begin position="74"/>
        <end position="77"/>
    </location>
</feature>
<feature type="strand" evidence="1">
    <location>
        <begin position="82"/>
        <end position="86"/>
    </location>
</feature>
<feature type="strand" evidence="1">
    <location>
        <begin position="89"/>
        <end position="99"/>
    </location>
</feature>
<feature type="helix" evidence="1">
    <location>
        <begin position="103"/>
        <end position="106"/>
    </location>
</feature>
<accession>Q58174</accession>
<protein>
    <recommendedName>
        <fullName>Uncharacterized protein MJ0764</fullName>
    </recommendedName>
</protein>
<keyword id="KW-0002">3D-structure</keyword>
<keyword id="KW-1185">Reference proteome</keyword>
<organism>
    <name type="scientific">Methanocaldococcus jannaschii (strain ATCC 43067 / DSM 2661 / JAL-1 / JCM 10045 / NBRC 100440)</name>
    <name type="common">Methanococcus jannaschii</name>
    <dbReference type="NCBI Taxonomy" id="243232"/>
    <lineage>
        <taxon>Archaea</taxon>
        <taxon>Methanobacteriati</taxon>
        <taxon>Methanobacteriota</taxon>
        <taxon>Methanomada group</taxon>
        <taxon>Methanococci</taxon>
        <taxon>Methanococcales</taxon>
        <taxon>Methanocaldococcaceae</taxon>
        <taxon>Methanocaldococcus</taxon>
    </lineage>
</organism>
<evidence type="ECO:0007829" key="1">
    <source>
        <dbReference type="PDB" id="2B8M"/>
    </source>
</evidence>
<gene>
    <name type="ordered locus">MJ0764</name>
</gene>
<proteinExistence type="evidence at protein level"/>
<dbReference type="EMBL" id="L77117">
    <property type="protein sequence ID" value="AAB98760.1"/>
    <property type="molecule type" value="Genomic_DNA"/>
</dbReference>
<dbReference type="PIR" id="D64395">
    <property type="entry name" value="D64395"/>
</dbReference>
<dbReference type="RefSeq" id="WP_010870269.1">
    <property type="nucleotide sequence ID" value="NC_000909.1"/>
</dbReference>
<dbReference type="PDB" id="2B8M">
    <property type="method" value="X-ray"/>
    <property type="resolution" value="1.70 A"/>
    <property type="chains" value="A=1-116"/>
</dbReference>
<dbReference type="PDBsum" id="2B8M"/>
<dbReference type="SMR" id="Q58174"/>
<dbReference type="STRING" id="243232.MJ_0764"/>
<dbReference type="PaxDb" id="243232-MJ_0764"/>
<dbReference type="EnsemblBacteria" id="AAB98760">
    <property type="protein sequence ID" value="AAB98760"/>
    <property type="gene ID" value="MJ_0764"/>
</dbReference>
<dbReference type="GeneID" id="1451641"/>
<dbReference type="KEGG" id="mja:MJ_0764"/>
<dbReference type="eggNOG" id="arCOG02992">
    <property type="taxonomic scope" value="Archaea"/>
</dbReference>
<dbReference type="HOGENOM" id="CLU_2115513_0_0_2"/>
<dbReference type="InParanoid" id="Q58174"/>
<dbReference type="OrthoDB" id="63465at2157"/>
<dbReference type="EvolutionaryTrace" id="Q58174"/>
<dbReference type="Proteomes" id="UP000000805">
    <property type="component" value="Chromosome"/>
</dbReference>
<dbReference type="CDD" id="cd20290">
    <property type="entry name" value="cupin_Mj0764-like"/>
    <property type="match status" value="1"/>
</dbReference>
<dbReference type="Gene3D" id="2.60.120.10">
    <property type="entry name" value="Jelly Rolls"/>
    <property type="match status" value="1"/>
</dbReference>
<dbReference type="InterPro" id="IPR006045">
    <property type="entry name" value="Cupin_1"/>
</dbReference>
<dbReference type="InterPro" id="IPR014710">
    <property type="entry name" value="RmlC-like_jellyroll"/>
</dbReference>
<dbReference type="InterPro" id="IPR011051">
    <property type="entry name" value="RmlC_Cupin_sf"/>
</dbReference>
<dbReference type="Pfam" id="PF00190">
    <property type="entry name" value="Cupin_1"/>
    <property type="match status" value="1"/>
</dbReference>
<dbReference type="SUPFAM" id="SSF51182">
    <property type="entry name" value="RmlC-like cupins"/>
    <property type="match status" value="1"/>
</dbReference>